<protein>
    <recommendedName>
        <fullName evidence="7 9">Major mite allergen Der p 23</fullName>
    </recommendedName>
    <alternativeName>
        <fullName evidence="8">Major house dust mite allergen Der p 23</fullName>
        <shortName evidence="8">Major HDM allergen Der p 23</shortName>
    </alternativeName>
    <alternativeName>
        <fullName evidence="7">Peritrophin-like protein Der p 23</fullName>
    </alternativeName>
    <allergenName evidence="7 9">Der p 23</allergenName>
</protein>
<evidence type="ECO:0000255" key="1"/>
<evidence type="ECO:0000255" key="2">
    <source>
        <dbReference type="PROSITE-ProRule" id="PRU00144"/>
    </source>
</evidence>
<evidence type="ECO:0000256" key="3">
    <source>
        <dbReference type="SAM" id="MobiDB-lite"/>
    </source>
</evidence>
<evidence type="ECO:0000269" key="4">
    <source>
    </source>
</evidence>
<evidence type="ECO:0000269" key="5">
    <source>
    </source>
</evidence>
<evidence type="ECO:0000269" key="6">
    <source>
    </source>
</evidence>
<evidence type="ECO:0000303" key="7">
    <source>
    </source>
</evidence>
<evidence type="ECO:0000303" key="8">
    <source>
    </source>
</evidence>
<evidence type="ECO:0000303" key="9">
    <source>
    </source>
</evidence>
<evidence type="ECO:0000305" key="10">
    <source>
    </source>
</evidence>
<evidence type="ECO:0000312" key="11">
    <source>
        <dbReference type="EMBL" id="ACB46292.1"/>
    </source>
</evidence>
<evidence type="ECO:0007744" key="12">
    <source>
        <dbReference type="PDB" id="4ZCE"/>
    </source>
</evidence>
<evidence type="ECO:0007829" key="13">
    <source>
        <dbReference type="PDB" id="4ZCE"/>
    </source>
</evidence>
<proteinExistence type="evidence at protein level"/>
<accession>L7N6F8</accession>
<dbReference type="EMBL" id="EU414751">
    <property type="protein sequence ID" value="ACB46292.1"/>
    <property type="molecule type" value="mRNA"/>
</dbReference>
<dbReference type="RefSeq" id="XP_027193776.1">
    <property type="nucleotide sequence ID" value="XM_027337975.1"/>
</dbReference>
<dbReference type="PDB" id="4ZCE">
    <property type="method" value="X-ray"/>
    <property type="resolution" value="1.55 A"/>
    <property type="chains" value="A/B=44-90"/>
</dbReference>
<dbReference type="PDBsum" id="4ZCE"/>
<dbReference type="SMR" id="L7N6F8"/>
<dbReference type="Allergome" id="5747">
    <property type="allergen name" value="Der p 23"/>
</dbReference>
<dbReference type="Allergome" id="5748">
    <property type="allergen name" value="Der p 23.0101"/>
</dbReference>
<dbReference type="ABCD" id="L7N6F8">
    <property type="antibodies" value="1 sequenced antibody"/>
</dbReference>
<dbReference type="EnsemblMetazoa" id="XM_027337975.1">
    <property type="protein sequence ID" value="XP_027193776.1"/>
    <property type="gene ID" value="LOC113788516"/>
</dbReference>
<dbReference type="GeneID" id="113788516"/>
<dbReference type="InParanoid" id="L7N6F8"/>
<dbReference type="OrthoDB" id="439917at2759"/>
<dbReference type="EvolutionaryTrace" id="L7N6F8"/>
<dbReference type="Proteomes" id="UP000515146">
    <property type="component" value="Unplaced"/>
</dbReference>
<dbReference type="GO" id="GO:0031410">
    <property type="term" value="C:cytoplasmic vesicle"/>
    <property type="evidence" value="ECO:0000314"/>
    <property type="project" value="UniProtKB"/>
</dbReference>
<dbReference type="GO" id="GO:0005783">
    <property type="term" value="C:endoplasmic reticulum"/>
    <property type="evidence" value="ECO:0000314"/>
    <property type="project" value="UniProtKB"/>
</dbReference>
<dbReference type="GO" id="GO:0005576">
    <property type="term" value="C:extracellular region"/>
    <property type="evidence" value="ECO:0000314"/>
    <property type="project" value="UniProtKB"/>
</dbReference>
<dbReference type="GO" id="GO:0019863">
    <property type="term" value="F:IgE binding"/>
    <property type="evidence" value="ECO:0000315"/>
    <property type="project" value="UniProtKB"/>
</dbReference>
<dbReference type="Gene3D" id="2.170.140.10">
    <property type="entry name" value="Chitin binding domain"/>
    <property type="match status" value="1"/>
</dbReference>
<dbReference type="InterPro" id="IPR002557">
    <property type="entry name" value="Chitin-bd_dom"/>
</dbReference>
<dbReference type="InterPro" id="IPR036508">
    <property type="entry name" value="Chitin-bd_dom_sf"/>
</dbReference>
<dbReference type="Pfam" id="PF01607">
    <property type="entry name" value="CBM_14"/>
    <property type="match status" value="1"/>
</dbReference>
<dbReference type="SUPFAM" id="SSF57625">
    <property type="entry name" value="Invertebrate chitin-binding proteins"/>
    <property type="match status" value="1"/>
</dbReference>
<dbReference type="PROSITE" id="PS50940">
    <property type="entry name" value="CHIT_BIND_II"/>
    <property type="match status" value="1"/>
</dbReference>
<name>DEP23_DERPT</name>
<comment type="function">
    <text evidence="6">Does not bind chitin in vitro.</text>
</comment>
<comment type="subunit">
    <text evidence="4 6">Monomer.</text>
</comment>
<comment type="subcellular location">
    <subcellularLocation>
        <location evidence="4">Secreted</location>
    </subcellularLocation>
    <subcellularLocation>
        <location evidence="4">Endoplasmic reticulum</location>
    </subcellularLocation>
    <subcellularLocation>
        <location evidence="4">Cytoplasmic vesicle</location>
    </subcellularLocation>
    <text evidence="4">Localizes to the peritrophic matrix ligning the midgut and on the surface of fecal pellets.</text>
</comment>
<comment type="tissue specificity">
    <text evidence="4">Expressed in epithelial cells of the midgut.</text>
</comment>
<comment type="allergen">
    <text evidence="4 5 6">Causes an allergic reaction in human. Common symptoms of mite allergy are bronchial asthma, allergic rhinitis and conjunctivitis. Binds to IgE in 74% of 374 house dust mite allergic patients from different countries.</text>
</comment>
<comment type="biotechnology">
    <text evidence="5">Non-allergenic peptides derived from the C-terminal IgE epitope-containing part might be used for immunotherapy to desensitize individuals with mite allergy.</text>
</comment>
<organism evidence="11">
    <name type="scientific">Dermatophagoides pteronyssinus</name>
    <name type="common">European house dust mite</name>
    <dbReference type="NCBI Taxonomy" id="6956"/>
    <lineage>
        <taxon>Eukaryota</taxon>
        <taxon>Metazoa</taxon>
        <taxon>Ecdysozoa</taxon>
        <taxon>Arthropoda</taxon>
        <taxon>Chelicerata</taxon>
        <taxon>Arachnida</taxon>
        <taxon>Acari</taxon>
        <taxon>Acariformes</taxon>
        <taxon>Sarcoptiformes</taxon>
        <taxon>Astigmata</taxon>
        <taxon>Psoroptidia</taxon>
        <taxon>Analgoidea</taxon>
        <taxon>Pyroglyphidae</taxon>
        <taxon>Dermatophagoidinae</taxon>
        <taxon>Dermatophagoides</taxon>
    </lineage>
</organism>
<keyword id="KW-0002">3D-structure</keyword>
<keyword id="KW-0020">Allergen</keyword>
<keyword id="KW-0968">Cytoplasmic vesicle</keyword>
<keyword id="KW-1015">Disulfide bond</keyword>
<keyword id="KW-0256">Endoplasmic reticulum</keyword>
<keyword id="KW-0389">IgE-binding protein</keyword>
<keyword id="KW-1185">Reference proteome</keyword>
<keyword id="KW-0964">Secreted</keyword>
<keyword id="KW-0732">Signal</keyword>
<sequence>MKFNIIIVFISLAILVHSSYAANDNDDDPTTTVHPTTTEQPDDKFECPSRFGYFADPKDPHKFYICSNWEAVHKDCPGNTRWNEDEETCT</sequence>
<feature type="signal peptide" evidence="10">
    <location>
        <begin position="1"/>
        <end position="21"/>
    </location>
</feature>
<feature type="chain" id="PRO_5003982384" description="Major mite allergen Der p 23" evidence="1">
    <location>
        <begin position="22"/>
        <end position="90"/>
    </location>
</feature>
<feature type="domain" description="Chitin-binding type-2" evidence="2">
    <location>
        <begin position="44"/>
        <end position="90"/>
    </location>
</feature>
<feature type="region of interest" description="Disordered" evidence="3">
    <location>
        <begin position="22"/>
        <end position="42"/>
    </location>
</feature>
<feature type="region of interest" description="Important for IgE-binding" evidence="5">
    <location>
        <begin position="52"/>
        <end position="90"/>
    </location>
</feature>
<feature type="compositionally biased region" description="Low complexity" evidence="3">
    <location>
        <begin position="30"/>
        <end position="39"/>
    </location>
</feature>
<feature type="disulfide bond" evidence="6 12">
    <location>
        <begin position="47"/>
        <end position="66"/>
    </location>
</feature>
<feature type="disulfide bond" evidence="2 6 12">
    <location>
        <begin position="76"/>
        <end position="89"/>
    </location>
</feature>
<feature type="strand" evidence="13">
    <location>
        <begin position="48"/>
        <end position="55"/>
    </location>
</feature>
<feature type="strand" evidence="13">
    <location>
        <begin position="62"/>
        <end position="67"/>
    </location>
</feature>
<feature type="strand" evidence="13">
    <location>
        <begin position="70"/>
        <end position="75"/>
    </location>
</feature>
<feature type="strand" evidence="13">
    <location>
        <begin position="81"/>
        <end position="83"/>
    </location>
</feature>
<feature type="turn" evidence="13">
    <location>
        <begin position="84"/>
        <end position="87"/>
    </location>
</feature>
<feature type="strand" evidence="13">
    <location>
        <begin position="88"/>
        <end position="90"/>
    </location>
</feature>
<reference evidence="11" key="1">
    <citation type="journal article" date="2013" name="J. Immunol.">
        <title>Identification of Der p 23, a Peritrophin-like Protein, as a New Major Dermatophagoides pteronyssinus Allergen Associated with the Peritrophic Matrix of Mite Fecal Pellets.</title>
        <authorList>
            <person name="Weghofer M."/>
            <person name="Grote M."/>
            <person name="Resch Y."/>
            <person name="Casset A."/>
            <person name="Kneidinger M."/>
            <person name="Kopec J."/>
            <person name="Thomas W.R."/>
            <person name="Fernandez-Caldas E."/>
            <person name="Kabesch M."/>
            <person name="Ferrara R."/>
            <person name="Mari A."/>
            <person name="Purohit A."/>
            <person name="Pauli G."/>
            <person name="Horak F."/>
            <person name="Keller W."/>
            <person name="Valent P."/>
            <person name="Valenta R."/>
            <person name="Vrtala S."/>
        </authorList>
    </citation>
    <scope>NUCLEOTIDE SEQUENCE [MRNA]</scope>
    <scope>SUBUNIT</scope>
    <scope>SUBCELLULAR LOCATION</scope>
    <scope>TISSUE SPECIFICITY</scope>
    <scope>ALLERGEN</scope>
</reference>
<reference key="2">
    <citation type="journal article" date="2014" name="J. Immunol.">
        <title>Conversion of Der p 23, a new major house dust mite allergen, into a hypoallergenic vaccine.</title>
        <authorList>
            <person name="Banerjee S."/>
            <person name="Weber M."/>
            <person name="Blatt K."/>
            <person name="Swoboda I."/>
            <person name="Focke-Tejkl M."/>
            <person name="Valent P."/>
            <person name="Valenta R."/>
            <person name="Vrtala S."/>
        </authorList>
    </citation>
    <scope>ALLERGEN</scope>
    <scope>BIOTECHNOLOGY</scope>
    <scope>REGION</scope>
</reference>
<reference evidence="12" key="3">
    <citation type="journal article" date="2016" name="Clin. Exp. Allergy">
        <title>Serological, genomic and structural analyses of the major mite allergen Der p 23.</title>
        <authorList>
            <person name="Mueller G.A."/>
            <person name="Randall T.A."/>
            <person name="Glesner J."/>
            <person name="Pedersen L.C."/>
            <person name="Perera L."/>
            <person name="Edwards L.L."/>
            <person name="DeRose E.F."/>
            <person name="Chapman M.D."/>
            <person name="London R.E."/>
            <person name="Pomes A."/>
        </authorList>
    </citation>
    <scope>X-RAY CRYSTALLOGRAPHY (1.55 ANGSTROMS) OF 44-90</scope>
    <scope>FUNCTION</scope>
    <scope>SUBUNIT</scope>
    <scope>ALLERGEN</scope>
    <scope>DISULFIDE BONDS</scope>
</reference>